<gene>
    <name evidence="1" type="primary">fabH</name>
    <name type="ordered locus">HPP12_0203</name>
</gene>
<reference key="1">
    <citation type="submission" date="2008-10" db="EMBL/GenBank/DDBJ databases">
        <title>The complete genome sequence of Helicobacter pylori strain P12.</title>
        <authorList>
            <person name="Fischer W."/>
            <person name="Windhager L."/>
            <person name="Karnholz A."/>
            <person name="Zeiller M."/>
            <person name="Zimmer R."/>
            <person name="Haas R."/>
        </authorList>
    </citation>
    <scope>NUCLEOTIDE SEQUENCE [LARGE SCALE GENOMIC DNA]</scope>
    <source>
        <strain>P12</strain>
    </source>
</reference>
<feature type="chain" id="PRO_1000187868" description="Beta-ketoacyl-[acyl-carrier-protein] synthase III">
    <location>
        <begin position="1"/>
        <end position="330"/>
    </location>
</feature>
<feature type="region of interest" description="ACP-binding" evidence="1">
    <location>
        <begin position="256"/>
        <end position="260"/>
    </location>
</feature>
<feature type="active site" evidence="1">
    <location>
        <position position="115"/>
    </location>
</feature>
<feature type="active site" evidence="1">
    <location>
        <position position="255"/>
    </location>
</feature>
<feature type="active site" evidence="1">
    <location>
        <position position="285"/>
    </location>
</feature>
<comment type="function">
    <text evidence="1">Catalyzes the condensation reaction of fatty acid synthesis by the addition to an acyl acceptor of two carbons from malonyl-ACP. Catalyzes the first condensation reaction which initiates fatty acid synthesis and may therefore play a role in governing the total rate of fatty acid production. Possesses both acetoacetyl-ACP synthase and acetyl transacylase activities. Its substrate specificity determines the biosynthesis of branched-chain and/or straight-chain of fatty acids.</text>
</comment>
<comment type="catalytic activity">
    <reaction evidence="1">
        <text>malonyl-[ACP] + acetyl-CoA + H(+) = 3-oxobutanoyl-[ACP] + CO2 + CoA</text>
        <dbReference type="Rhea" id="RHEA:12080"/>
        <dbReference type="Rhea" id="RHEA-COMP:9623"/>
        <dbReference type="Rhea" id="RHEA-COMP:9625"/>
        <dbReference type="ChEBI" id="CHEBI:15378"/>
        <dbReference type="ChEBI" id="CHEBI:16526"/>
        <dbReference type="ChEBI" id="CHEBI:57287"/>
        <dbReference type="ChEBI" id="CHEBI:57288"/>
        <dbReference type="ChEBI" id="CHEBI:78449"/>
        <dbReference type="ChEBI" id="CHEBI:78450"/>
        <dbReference type="EC" id="2.3.1.180"/>
    </reaction>
</comment>
<comment type="pathway">
    <text evidence="1">Lipid metabolism; fatty acid biosynthesis.</text>
</comment>
<comment type="subunit">
    <text evidence="1">Homodimer.</text>
</comment>
<comment type="subcellular location">
    <subcellularLocation>
        <location evidence="1">Cytoplasm</location>
    </subcellularLocation>
</comment>
<comment type="domain">
    <text evidence="1">The last Arg residue of the ACP-binding site is essential for the weak association between ACP/AcpP and FabH.</text>
</comment>
<comment type="similarity">
    <text evidence="1">Belongs to the thiolase-like superfamily. FabH family.</text>
</comment>
<organism>
    <name type="scientific">Helicobacter pylori (strain P12)</name>
    <dbReference type="NCBI Taxonomy" id="570508"/>
    <lineage>
        <taxon>Bacteria</taxon>
        <taxon>Pseudomonadati</taxon>
        <taxon>Campylobacterota</taxon>
        <taxon>Epsilonproteobacteria</taxon>
        <taxon>Campylobacterales</taxon>
        <taxon>Helicobacteraceae</taxon>
        <taxon>Helicobacter</taxon>
    </lineage>
</organism>
<protein>
    <recommendedName>
        <fullName evidence="1">Beta-ketoacyl-[acyl-carrier-protein] synthase III</fullName>
        <shortName evidence="1">Beta-ketoacyl-ACP synthase III</shortName>
        <shortName evidence="1">KAS III</shortName>
        <ecNumber evidence="1">2.3.1.180</ecNumber>
    </recommendedName>
    <alternativeName>
        <fullName evidence="1">3-oxoacyl-[acyl-carrier-protein] synthase 3</fullName>
    </alternativeName>
    <alternativeName>
        <fullName evidence="1">3-oxoacyl-[acyl-carrier-protein] synthase III</fullName>
    </alternativeName>
</protein>
<evidence type="ECO:0000255" key="1">
    <source>
        <dbReference type="HAMAP-Rule" id="MF_01815"/>
    </source>
</evidence>
<name>FABH_HELP2</name>
<accession>B6JKD5</accession>
<sequence length="330" mass="36376">MEFYASLKSIAMHVPSERVKNAEFQQFLDTSDEWIEKRTGIKERRFANDEEKSSDLGVIAAKQAIERAHLTPKDIDLVVVATLSPDFLAMPSTACVLSAKLGIENKPAFDISAACTGFIYLLSVAKAYVESGMCENVLIVGAEKTSSVLDFKDRGTCILFGDGAGACVIGRTKRLKESILDVQISANGNFSNYLYTPRTLKPTPFNAKEEALEPFLCMKGNEVFKLAVKTLLRDVEMILEKNALKPEDVRLFIPHQANFRIIQAVREHLDFKDEQVVLTVHKYGNTSAASIPMAMGEAYEEGRLKKGDLMLLDAFGGGLTWGSALVYFGG</sequence>
<proteinExistence type="inferred from homology"/>
<dbReference type="EC" id="2.3.1.180" evidence="1"/>
<dbReference type="EMBL" id="CP001217">
    <property type="protein sequence ID" value="ACJ07363.1"/>
    <property type="molecule type" value="Genomic_DNA"/>
</dbReference>
<dbReference type="SMR" id="B6JKD5"/>
<dbReference type="KEGG" id="hpp:HPP12_0203"/>
<dbReference type="HOGENOM" id="CLU_039592_4_1_7"/>
<dbReference type="UniPathway" id="UPA00094"/>
<dbReference type="Proteomes" id="UP000008198">
    <property type="component" value="Chromosome"/>
</dbReference>
<dbReference type="GO" id="GO:0005737">
    <property type="term" value="C:cytoplasm"/>
    <property type="evidence" value="ECO:0007669"/>
    <property type="project" value="UniProtKB-SubCell"/>
</dbReference>
<dbReference type="GO" id="GO:0004315">
    <property type="term" value="F:3-oxoacyl-[acyl-carrier-protein] synthase activity"/>
    <property type="evidence" value="ECO:0007669"/>
    <property type="project" value="InterPro"/>
</dbReference>
<dbReference type="GO" id="GO:0033818">
    <property type="term" value="F:beta-ketoacyl-acyl-carrier-protein synthase III activity"/>
    <property type="evidence" value="ECO:0007669"/>
    <property type="project" value="UniProtKB-UniRule"/>
</dbReference>
<dbReference type="GO" id="GO:0006633">
    <property type="term" value="P:fatty acid biosynthetic process"/>
    <property type="evidence" value="ECO:0007669"/>
    <property type="project" value="UniProtKB-UniRule"/>
</dbReference>
<dbReference type="GO" id="GO:0044550">
    <property type="term" value="P:secondary metabolite biosynthetic process"/>
    <property type="evidence" value="ECO:0007669"/>
    <property type="project" value="TreeGrafter"/>
</dbReference>
<dbReference type="CDD" id="cd00830">
    <property type="entry name" value="KAS_III"/>
    <property type="match status" value="1"/>
</dbReference>
<dbReference type="FunFam" id="3.40.47.10:FF:000004">
    <property type="entry name" value="3-oxoacyl-[acyl-carrier-protein] synthase 3"/>
    <property type="match status" value="1"/>
</dbReference>
<dbReference type="Gene3D" id="3.40.47.10">
    <property type="match status" value="1"/>
</dbReference>
<dbReference type="HAMAP" id="MF_01815">
    <property type="entry name" value="FabH"/>
    <property type="match status" value="1"/>
</dbReference>
<dbReference type="InterPro" id="IPR013747">
    <property type="entry name" value="ACP_syn_III_C"/>
</dbReference>
<dbReference type="InterPro" id="IPR013751">
    <property type="entry name" value="ACP_syn_III_N"/>
</dbReference>
<dbReference type="InterPro" id="IPR004655">
    <property type="entry name" value="FabH"/>
</dbReference>
<dbReference type="InterPro" id="IPR016039">
    <property type="entry name" value="Thiolase-like"/>
</dbReference>
<dbReference type="NCBIfam" id="TIGR00747">
    <property type="entry name" value="fabH"/>
    <property type="match status" value="1"/>
</dbReference>
<dbReference type="NCBIfam" id="NF006829">
    <property type="entry name" value="PRK09352.1"/>
    <property type="match status" value="1"/>
</dbReference>
<dbReference type="PANTHER" id="PTHR34069">
    <property type="entry name" value="3-OXOACYL-[ACYL-CARRIER-PROTEIN] SYNTHASE 3"/>
    <property type="match status" value="1"/>
</dbReference>
<dbReference type="PANTHER" id="PTHR34069:SF2">
    <property type="entry name" value="BETA-KETOACYL-[ACYL-CARRIER-PROTEIN] SYNTHASE III"/>
    <property type="match status" value="1"/>
</dbReference>
<dbReference type="Pfam" id="PF08545">
    <property type="entry name" value="ACP_syn_III"/>
    <property type="match status" value="1"/>
</dbReference>
<dbReference type="Pfam" id="PF08541">
    <property type="entry name" value="ACP_syn_III_C"/>
    <property type="match status" value="1"/>
</dbReference>
<dbReference type="SUPFAM" id="SSF53901">
    <property type="entry name" value="Thiolase-like"/>
    <property type="match status" value="1"/>
</dbReference>
<keyword id="KW-0012">Acyltransferase</keyword>
<keyword id="KW-0963">Cytoplasm</keyword>
<keyword id="KW-0275">Fatty acid biosynthesis</keyword>
<keyword id="KW-0276">Fatty acid metabolism</keyword>
<keyword id="KW-0444">Lipid biosynthesis</keyword>
<keyword id="KW-0443">Lipid metabolism</keyword>
<keyword id="KW-0511">Multifunctional enzyme</keyword>
<keyword id="KW-0808">Transferase</keyword>